<name>COX1_LOCMI</name>
<dbReference type="EC" id="7.1.1.9"/>
<dbReference type="EMBL" id="X80245">
    <property type="protein sequence ID" value="CAA56527.1"/>
    <property type="molecule type" value="Genomic_DNA"/>
</dbReference>
<dbReference type="PIR" id="T11467">
    <property type="entry name" value="T11467"/>
</dbReference>
<dbReference type="RefSeq" id="NP_007291.1">
    <property type="nucleotide sequence ID" value="NC_001712.1"/>
</dbReference>
<dbReference type="SMR" id="Q36421"/>
<dbReference type="GeneID" id="807962"/>
<dbReference type="CTD" id="4512"/>
<dbReference type="UniPathway" id="UPA00705"/>
<dbReference type="GO" id="GO:0005743">
    <property type="term" value="C:mitochondrial inner membrane"/>
    <property type="evidence" value="ECO:0007669"/>
    <property type="project" value="UniProtKB-SubCell"/>
</dbReference>
<dbReference type="GO" id="GO:0045277">
    <property type="term" value="C:respiratory chain complex IV"/>
    <property type="evidence" value="ECO:0007669"/>
    <property type="project" value="InterPro"/>
</dbReference>
<dbReference type="GO" id="GO:0004129">
    <property type="term" value="F:cytochrome-c oxidase activity"/>
    <property type="evidence" value="ECO:0007669"/>
    <property type="project" value="UniProtKB-EC"/>
</dbReference>
<dbReference type="GO" id="GO:0020037">
    <property type="term" value="F:heme binding"/>
    <property type="evidence" value="ECO:0007669"/>
    <property type="project" value="InterPro"/>
</dbReference>
<dbReference type="GO" id="GO:0046872">
    <property type="term" value="F:metal ion binding"/>
    <property type="evidence" value="ECO:0007669"/>
    <property type="project" value="UniProtKB-KW"/>
</dbReference>
<dbReference type="GO" id="GO:0015990">
    <property type="term" value="P:electron transport coupled proton transport"/>
    <property type="evidence" value="ECO:0007669"/>
    <property type="project" value="TreeGrafter"/>
</dbReference>
<dbReference type="GO" id="GO:0006123">
    <property type="term" value="P:mitochondrial electron transport, cytochrome c to oxygen"/>
    <property type="evidence" value="ECO:0007669"/>
    <property type="project" value="TreeGrafter"/>
</dbReference>
<dbReference type="CDD" id="cd01663">
    <property type="entry name" value="Cyt_c_Oxidase_I"/>
    <property type="match status" value="1"/>
</dbReference>
<dbReference type="FunFam" id="1.20.210.10:FF:000001">
    <property type="entry name" value="Cytochrome c oxidase subunit 1"/>
    <property type="match status" value="1"/>
</dbReference>
<dbReference type="Gene3D" id="1.20.210.10">
    <property type="entry name" value="Cytochrome c oxidase-like, subunit I domain"/>
    <property type="match status" value="1"/>
</dbReference>
<dbReference type="InterPro" id="IPR023616">
    <property type="entry name" value="Cyt_c_oxase-like_su1_dom"/>
</dbReference>
<dbReference type="InterPro" id="IPR036927">
    <property type="entry name" value="Cyt_c_oxase-like_su1_sf"/>
</dbReference>
<dbReference type="InterPro" id="IPR000883">
    <property type="entry name" value="Cyt_C_Oxase_1"/>
</dbReference>
<dbReference type="InterPro" id="IPR023615">
    <property type="entry name" value="Cyt_c_Oxase_su1_BS"/>
</dbReference>
<dbReference type="InterPro" id="IPR033944">
    <property type="entry name" value="Cyt_c_oxase_su1_dom"/>
</dbReference>
<dbReference type="PANTHER" id="PTHR10422">
    <property type="entry name" value="CYTOCHROME C OXIDASE SUBUNIT 1"/>
    <property type="match status" value="1"/>
</dbReference>
<dbReference type="PANTHER" id="PTHR10422:SF18">
    <property type="entry name" value="CYTOCHROME C OXIDASE SUBUNIT 1"/>
    <property type="match status" value="1"/>
</dbReference>
<dbReference type="Pfam" id="PF00115">
    <property type="entry name" value="COX1"/>
    <property type="match status" value="1"/>
</dbReference>
<dbReference type="PRINTS" id="PR01165">
    <property type="entry name" value="CYCOXIDASEI"/>
</dbReference>
<dbReference type="SUPFAM" id="SSF81442">
    <property type="entry name" value="Cytochrome c oxidase subunit I-like"/>
    <property type="match status" value="1"/>
</dbReference>
<dbReference type="PROSITE" id="PS50855">
    <property type="entry name" value="COX1"/>
    <property type="match status" value="1"/>
</dbReference>
<dbReference type="PROSITE" id="PS00077">
    <property type="entry name" value="COX1_CUB"/>
    <property type="match status" value="1"/>
</dbReference>
<reference key="1">
    <citation type="journal article" date="1995" name="J. Mol. Evol.">
        <title>The sequence, organization, and evolution of the Locusta migratoria mitochondrial genome.</title>
        <authorList>
            <person name="Flook P.K."/>
            <person name="Rowell C.H.F."/>
            <person name="Gellissen G."/>
        </authorList>
    </citation>
    <scope>NUCLEOTIDE SEQUENCE [GENOMIC DNA]</scope>
</reference>
<protein>
    <recommendedName>
        <fullName>Cytochrome c oxidase subunit 1</fullName>
        <ecNumber>7.1.1.9</ecNumber>
    </recommendedName>
    <alternativeName>
        <fullName>Cytochrome c oxidase polypeptide I</fullName>
    </alternativeName>
</protein>
<evidence type="ECO:0000250" key="1">
    <source>
        <dbReference type="UniProtKB" id="P00396"/>
    </source>
</evidence>
<evidence type="ECO:0000250" key="2">
    <source>
        <dbReference type="UniProtKB" id="P00401"/>
    </source>
</evidence>
<evidence type="ECO:0000255" key="3"/>
<evidence type="ECO:0000305" key="4"/>
<sequence>MTQKWLFSTNHKDIGTLYFMFGAWAGMVGTSMSMIIRAELGQPGTMINDDQLYNVIITAHAFVMIFFMVMPIMIGGFGNWLVPLMIGAPDMAFPRMNNMSFWLLPPSLTLLLMSSVVDNGAGTGWTVYPPLASVIAHSGASVDLAIFSLHLAGVSSILGAINFITTAINMRSNNMTLDQTPLFVWSVAITALLLLLSLPVLAGAITMLLTDRNLNTSFFDPAGGGDPILYQHLFWFFGHPEVYILILPGFGIISHIVCQESGKIESFGTIGMIYAMLSIGLMGFIVWAHHMFTVGMDVDTRAYFTSATMIIAVPTGIKVFSWMATLYGTKFKFNPPLLWALGFIFLFTMGGLTGLVLANSSLDIVLHDTYYVVAHFHYVLSMGAVFAIMGGIIQWYPLFTGLTMNSKWLKIQFTIMFIGVNLTFFPQHFLGLAGMPRRYSDYPDAYTSWNVISSIGSTISITGIIMFILIMWESMIKQRNVFIWTNMSSSTEWLQNNPPAEHSYSELPLINL</sequence>
<comment type="function">
    <text evidence="2">Component of the cytochrome c oxidase, the last enzyme in the mitochondrial electron transport chain which drives oxidative phosphorylation. The respiratory chain contains 3 multisubunit complexes succinate dehydrogenase (complex II, CII), ubiquinol-cytochrome c oxidoreductase (cytochrome b-c1 complex, complex III, CIII) and cytochrome c oxidase (complex IV, CIV), that cooperate to transfer electrons derived from NADH and succinate to molecular oxygen, creating an electrochemical gradient over the inner membrane that drives transmembrane transport and the ATP synthase. Cytochrome c oxidase is the component of the respiratory chain that catalyzes the reduction of oxygen to water. Electrons originating from reduced cytochrome c in the intermembrane space (IMS) are transferred via the dinuclear copper A center (CU(A)) of subunit 2 and heme A of subunit 1 to the active site in subunit 1, a binuclear center (BNC) formed by heme A3 and copper B (CU(B)). The BNC reduces molecular oxygen to 2 water molecules using 4 electrons from cytochrome c in the IMS and 4 protons from the mitochondrial matrix.</text>
</comment>
<comment type="catalytic activity">
    <reaction evidence="2">
        <text>4 Fe(II)-[cytochrome c] + O2 + 8 H(+)(in) = 4 Fe(III)-[cytochrome c] + 2 H2O + 4 H(+)(out)</text>
        <dbReference type="Rhea" id="RHEA:11436"/>
        <dbReference type="Rhea" id="RHEA-COMP:10350"/>
        <dbReference type="Rhea" id="RHEA-COMP:14399"/>
        <dbReference type="ChEBI" id="CHEBI:15377"/>
        <dbReference type="ChEBI" id="CHEBI:15378"/>
        <dbReference type="ChEBI" id="CHEBI:15379"/>
        <dbReference type="ChEBI" id="CHEBI:29033"/>
        <dbReference type="ChEBI" id="CHEBI:29034"/>
        <dbReference type="EC" id="7.1.1.9"/>
    </reaction>
    <physiologicalReaction direction="left-to-right" evidence="2">
        <dbReference type="Rhea" id="RHEA:11437"/>
    </physiologicalReaction>
</comment>
<comment type="cofactor">
    <cofactor evidence="2">
        <name>heme</name>
        <dbReference type="ChEBI" id="CHEBI:30413"/>
    </cofactor>
    <text evidence="2">Binds 2 heme A groups non-covalently per subunit.</text>
</comment>
<comment type="cofactor">
    <cofactor evidence="2">
        <name>Cu cation</name>
        <dbReference type="ChEBI" id="CHEBI:23378"/>
    </cofactor>
    <text evidence="2">Binds a copper B center.</text>
</comment>
<comment type="pathway">
    <text evidence="2">Energy metabolism; oxidative phosphorylation.</text>
</comment>
<comment type="subunit">
    <text evidence="2">Component of the cytochrome c oxidase (complex IV, CIV), a multisubunit enzyme composed of a catalytic core of 3 subunits and several supernumerary subunits. The complex exists as a monomer or a dimer and forms supercomplexes (SCs) in the inner mitochondrial membrane with ubiquinol-cytochrome c oxidoreductase (cytochrome b-c1 complex, complex III, CIII).</text>
</comment>
<comment type="subcellular location">
    <subcellularLocation>
        <location evidence="2">Mitochondrion inner membrane</location>
        <topology evidence="2">Multi-pass membrane protein</topology>
    </subcellularLocation>
</comment>
<comment type="similarity">
    <text evidence="4">Belongs to the heme-copper respiratory oxidase family.</text>
</comment>
<accession>Q36421</accession>
<gene>
    <name type="primary">COI</name>
</gene>
<organism>
    <name type="scientific">Locusta migratoria</name>
    <name type="common">Migratory locust</name>
    <dbReference type="NCBI Taxonomy" id="7004"/>
    <lineage>
        <taxon>Eukaryota</taxon>
        <taxon>Metazoa</taxon>
        <taxon>Ecdysozoa</taxon>
        <taxon>Arthropoda</taxon>
        <taxon>Hexapoda</taxon>
        <taxon>Insecta</taxon>
        <taxon>Pterygota</taxon>
        <taxon>Neoptera</taxon>
        <taxon>Polyneoptera</taxon>
        <taxon>Orthoptera</taxon>
        <taxon>Caelifera</taxon>
        <taxon>Acrididea</taxon>
        <taxon>Acridomorpha</taxon>
        <taxon>Acridoidea</taxon>
        <taxon>Acrididae</taxon>
        <taxon>Oedipodinae</taxon>
        <taxon>Locusta</taxon>
    </lineage>
</organism>
<geneLocation type="mitochondrion"/>
<keyword id="KW-0106">Calcium</keyword>
<keyword id="KW-0186">Copper</keyword>
<keyword id="KW-0249">Electron transport</keyword>
<keyword id="KW-0349">Heme</keyword>
<keyword id="KW-0408">Iron</keyword>
<keyword id="KW-0460">Magnesium</keyword>
<keyword id="KW-0472">Membrane</keyword>
<keyword id="KW-0479">Metal-binding</keyword>
<keyword id="KW-0496">Mitochondrion</keyword>
<keyword id="KW-0999">Mitochondrion inner membrane</keyword>
<keyword id="KW-0679">Respiratory chain</keyword>
<keyword id="KW-1278">Translocase</keyword>
<keyword id="KW-0812">Transmembrane</keyword>
<keyword id="KW-1133">Transmembrane helix</keyword>
<keyword id="KW-0813">Transport</keyword>
<proteinExistence type="inferred from homology"/>
<feature type="chain" id="PRO_0000183354" description="Cytochrome c oxidase subunit 1">
    <location>
        <begin position="1"/>
        <end position="512"/>
    </location>
</feature>
<feature type="transmembrane region" description="Helical" evidence="3">
    <location>
        <begin position="16"/>
        <end position="36"/>
    </location>
</feature>
<feature type="transmembrane region" description="Helical" evidence="3">
    <location>
        <begin position="55"/>
        <end position="75"/>
    </location>
</feature>
<feature type="transmembrane region" description="Helical" evidence="3">
    <location>
        <begin position="101"/>
        <end position="121"/>
    </location>
</feature>
<feature type="transmembrane region" description="Helical" evidence="3">
    <location>
        <begin position="144"/>
        <end position="164"/>
    </location>
</feature>
<feature type="transmembrane region" description="Helical" evidence="3">
    <location>
        <begin position="182"/>
        <end position="202"/>
    </location>
</feature>
<feature type="transmembrane region" description="Helical" evidence="3">
    <location>
        <begin position="233"/>
        <end position="253"/>
    </location>
</feature>
<feature type="transmembrane region" description="Helical" evidence="3">
    <location>
        <begin position="267"/>
        <end position="287"/>
    </location>
</feature>
<feature type="transmembrane region" description="Helical" evidence="3">
    <location>
        <begin position="307"/>
        <end position="327"/>
    </location>
</feature>
<feature type="transmembrane region" description="Helical" evidence="3">
    <location>
        <begin position="337"/>
        <end position="357"/>
    </location>
</feature>
<feature type="transmembrane region" description="Helical" evidence="3">
    <location>
        <begin position="379"/>
        <end position="399"/>
    </location>
</feature>
<feature type="transmembrane region" description="Helical" evidence="3">
    <location>
        <begin position="413"/>
        <end position="433"/>
    </location>
</feature>
<feature type="transmembrane region" description="Helical" evidence="3">
    <location>
        <begin position="451"/>
        <end position="471"/>
    </location>
</feature>
<feature type="binding site" evidence="2">
    <location>
        <position position="39"/>
    </location>
    <ligand>
        <name>Ca(2+)</name>
        <dbReference type="ChEBI" id="CHEBI:29108"/>
    </ligand>
</feature>
<feature type="binding site" evidence="2">
    <location>
        <position position="44"/>
    </location>
    <ligand>
        <name>Ca(2+)</name>
        <dbReference type="ChEBI" id="CHEBI:29108"/>
    </ligand>
</feature>
<feature type="binding site" description="axial binding residue" evidence="2">
    <location>
        <position position="60"/>
    </location>
    <ligand>
        <name>Fe(II)-heme a</name>
        <dbReference type="ChEBI" id="CHEBI:61715"/>
        <note>low-spin</note>
    </ligand>
    <ligandPart>
        <name>Fe</name>
        <dbReference type="ChEBI" id="CHEBI:18248"/>
    </ligandPart>
</feature>
<feature type="binding site" evidence="2">
    <location>
        <position position="239"/>
    </location>
    <ligand>
        <name>Cu cation</name>
        <dbReference type="ChEBI" id="CHEBI:23378"/>
        <label>B</label>
    </ligand>
</feature>
<feature type="binding site" evidence="1">
    <location>
        <position position="243"/>
    </location>
    <ligand>
        <name>O2</name>
        <dbReference type="ChEBI" id="CHEBI:15379"/>
    </ligand>
</feature>
<feature type="binding site" evidence="2">
    <location>
        <position position="289"/>
    </location>
    <ligand>
        <name>Cu cation</name>
        <dbReference type="ChEBI" id="CHEBI:23378"/>
        <label>B</label>
    </ligand>
</feature>
<feature type="binding site" evidence="2">
    <location>
        <position position="290"/>
    </location>
    <ligand>
        <name>Cu cation</name>
        <dbReference type="ChEBI" id="CHEBI:23378"/>
        <label>B</label>
    </ligand>
</feature>
<feature type="binding site" evidence="2">
    <location>
        <position position="367"/>
    </location>
    <ligand>
        <name>Mg(2+)</name>
        <dbReference type="ChEBI" id="CHEBI:18420"/>
        <note>ligand shared with subunit 2</note>
    </ligand>
</feature>
<feature type="binding site" evidence="2">
    <location>
        <position position="368"/>
    </location>
    <ligand>
        <name>Mg(2+)</name>
        <dbReference type="ChEBI" id="CHEBI:18420"/>
        <note>ligand shared with subunit 2</note>
    </ligand>
</feature>
<feature type="binding site" description="axial binding residue" evidence="2">
    <location>
        <position position="375"/>
    </location>
    <ligand>
        <name>heme a3</name>
        <dbReference type="ChEBI" id="CHEBI:83282"/>
        <note>high-spin</note>
    </ligand>
    <ligandPart>
        <name>Fe</name>
        <dbReference type="ChEBI" id="CHEBI:18248"/>
    </ligandPart>
</feature>
<feature type="binding site" description="axial binding residue" evidence="2">
    <location>
        <position position="377"/>
    </location>
    <ligand>
        <name>Fe(II)-heme a</name>
        <dbReference type="ChEBI" id="CHEBI:61715"/>
        <note>low-spin</note>
    </ligand>
    <ligandPart>
        <name>Fe</name>
        <dbReference type="ChEBI" id="CHEBI:18248"/>
    </ligandPart>
</feature>
<feature type="cross-link" description="1'-histidyl-3'-tyrosine (His-Tyr)" evidence="2">
    <location>
        <begin position="239"/>
        <end position="243"/>
    </location>
</feature>